<organism>
    <name type="scientific">Shigella flexneri serotype 5b (strain 8401)</name>
    <dbReference type="NCBI Taxonomy" id="373384"/>
    <lineage>
        <taxon>Bacteria</taxon>
        <taxon>Pseudomonadati</taxon>
        <taxon>Pseudomonadota</taxon>
        <taxon>Gammaproteobacteria</taxon>
        <taxon>Enterobacterales</taxon>
        <taxon>Enterobacteriaceae</taxon>
        <taxon>Shigella</taxon>
    </lineage>
</organism>
<sequence>MSTSDSIVSSQTKQSSWRKSDTTWTLGLFGTAIGAGVLFFPIRAGFGGLIPILLMLVLAYPIAFYCHRALARLCLSGSNPSGNITETVEEHFGKTGGVVITFLYFFAICPLLWIYGVTITNTFMTFWENQLGFAPLNRGFVALFLLLLMAFVIWFGKDLMVKVMSYLVWPFIASLVLISLSLIPYWNSAVIDQVDLGSLSLTGHDGILITVWLGISIMVFSFNFSPIVSSFVVSKREEYEKDFGRDFTERKCSQIISRASMLMVAVVMFFAFSCLFTLSPANMAEAKAQNIPVLSYLANHFASMTGTKTTFAITLEYAASIIALVAIFKSFFGHYLGTLEGLNGLILKFGYKGDKTKVSLGKLNTLSMIFIMGSTWVVAYANPNILDLIEAMGAPIIASLLCLLPMYAIRKAPSLAKYRGRLDNVFVTVIGLLTILNIVYKLF</sequence>
<proteinExistence type="inferred from homology"/>
<dbReference type="EMBL" id="CP000266">
    <property type="protein sequence ID" value="ABF05213.1"/>
    <property type="molecule type" value="Genomic_DNA"/>
</dbReference>
<dbReference type="RefSeq" id="WP_000107721.1">
    <property type="nucleotide sequence ID" value="NC_008258.1"/>
</dbReference>
<dbReference type="SMR" id="Q0T0F2"/>
<dbReference type="KEGG" id="sfv:SFV_3157"/>
<dbReference type="HOGENOM" id="CLU_052043_1_1_6"/>
<dbReference type="Proteomes" id="UP000000659">
    <property type="component" value="Chromosome"/>
</dbReference>
<dbReference type="GO" id="GO:0005886">
    <property type="term" value="C:plasma membrane"/>
    <property type="evidence" value="ECO:0007669"/>
    <property type="project" value="UniProtKB-SubCell"/>
</dbReference>
<dbReference type="GO" id="GO:0015194">
    <property type="term" value="F:L-serine transmembrane transporter activity"/>
    <property type="evidence" value="ECO:0007669"/>
    <property type="project" value="InterPro"/>
</dbReference>
<dbReference type="GO" id="GO:0015293">
    <property type="term" value="F:symporter activity"/>
    <property type="evidence" value="ECO:0007669"/>
    <property type="project" value="UniProtKB-UniRule"/>
</dbReference>
<dbReference type="GO" id="GO:0015565">
    <property type="term" value="F:threonine efflux transmembrane transporter activity"/>
    <property type="evidence" value="ECO:0007669"/>
    <property type="project" value="InterPro"/>
</dbReference>
<dbReference type="HAMAP" id="MF_01583">
    <property type="entry name" value="Thr_Ser_transp_TdcC"/>
    <property type="match status" value="1"/>
</dbReference>
<dbReference type="InterPro" id="IPR018227">
    <property type="entry name" value="Amino_acid_transport_2"/>
</dbReference>
<dbReference type="InterPro" id="IPR004694">
    <property type="entry name" value="Hydroxy_aa_transpt"/>
</dbReference>
<dbReference type="InterPro" id="IPR023726">
    <property type="entry name" value="Thr/Ser_transpt_TdcC"/>
</dbReference>
<dbReference type="NCBIfam" id="NF010152">
    <property type="entry name" value="PRK13629.1"/>
    <property type="match status" value="1"/>
</dbReference>
<dbReference type="NCBIfam" id="TIGR00814">
    <property type="entry name" value="stp"/>
    <property type="match status" value="1"/>
</dbReference>
<dbReference type="PANTHER" id="PTHR35334">
    <property type="entry name" value="SERINE TRANSPORTER"/>
    <property type="match status" value="1"/>
</dbReference>
<dbReference type="PANTHER" id="PTHR35334:SF1">
    <property type="entry name" value="THREONINE_SERINE TRANSPORTER TDCC"/>
    <property type="match status" value="1"/>
</dbReference>
<dbReference type="Pfam" id="PF03222">
    <property type="entry name" value="Trp_Tyr_perm"/>
    <property type="match status" value="1"/>
</dbReference>
<name>TDCC_SHIF8</name>
<protein>
    <recommendedName>
        <fullName evidence="1">Threonine/serine transporter TdcC</fullName>
    </recommendedName>
    <alternativeName>
        <fullName evidence="1">H(+)/threonine-serine symporter</fullName>
    </alternativeName>
</protein>
<accession>Q0T0F2</accession>
<evidence type="ECO:0000255" key="1">
    <source>
        <dbReference type="HAMAP-Rule" id="MF_01583"/>
    </source>
</evidence>
<reference key="1">
    <citation type="journal article" date="2006" name="BMC Genomics">
        <title>Complete genome sequence of Shigella flexneri 5b and comparison with Shigella flexneri 2a.</title>
        <authorList>
            <person name="Nie H."/>
            <person name="Yang F."/>
            <person name="Zhang X."/>
            <person name="Yang J."/>
            <person name="Chen L."/>
            <person name="Wang J."/>
            <person name="Xiong Z."/>
            <person name="Peng J."/>
            <person name="Sun L."/>
            <person name="Dong J."/>
            <person name="Xue Y."/>
            <person name="Xu X."/>
            <person name="Chen S."/>
            <person name="Yao Z."/>
            <person name="Shen Y."/>
            <person name="Jin Q."/>
        </authorList>
    </citation>
    <scope>NUCLEOTIDE SEQUENCE [LARGE SCALE GENOMIC DNA]</scope>
    <source>
        <strain>8401</strain>
    </source>
</reference>
<gene>
    <name evidence="1" type="primary">tdcC</name>
    <name type="ordered locus">SFV_3157</name>
</gene>
<keyword id="KW-0029">Amino-acid transport</keyword>
<keyword id="KW-0997">Cell inner membrane</keyword>
<keyword id="KW-1003">Cell membrane</keyword>
<keyword id="KW-0472">Membrane</keyword>
<keyword id="KW-0769">Symport</keyword>
<keyword id="KW-0812">Transmembrane</keyword>
<keyword id="KW-1133">Transmembrane helix</keyword>
<keyword id="KW-0813">Transport</keyword>
<feature type="chain" id="PRO_0000309174" description="Threonine/serine transporter TdcC">
    <location>
        <begin position="1"/>
        <end position="443"/>
    </location>
</feature>
<feature type="transmembrane region" description="Helical" evidence="1">
    <location>
        <begin position="22"/>
        <end position="42"/>
    </location>
</feature>
<feature type="transmembrane region" description="Helical" evidence="1">
    <location>
        <begin position="44"/>
        <end position="64"/>
    </location>
</feature>
<feature type="transmembrane region" description="Helical" evidence="1">
    <location>
        <begin position="97"/>
        <end position="117"/>
    </location>
</feature>
<feature type="transmembrane region" description="Helical" evidence="1">
    <location>
        <begin position="140"/>
        <end position="160"/>
    </location>
</feature>
<feature type="transmembrane region" description="Helical" evidence="1">
    <location>
        <begin position="163"/>
        <end position="183"/>
    </location>
</feature>
<feature type="transmembrane region" description="Helical" evidence="1">
    <location>
        <begin position="207"/>
        <end position="227"/>
    </location>
</feature>
<feature type="transmembrane region" description="Helical" evidence="1">
    <location>
        <begin position="261"/>
        <end position="281"/>
    </location>
</feature>
<feature type="transmembrane region" description="Helical" evidence="1">
    <location>
        <begin position="311"/>
        <end position="331"/>
    </location>
</feature>
<feature type="transmembrane region" description="Helical" evidence="1">
    <location>
        <begin position="366"/>
        <end position="386"/>
    </location>
</feature>
<feature type="transmembrane region" description="Helical" evidence="1">
    <location>
        <begin position="389"/>
        <end position="409"/>
    </location>
</feature>
<feature type="transmembrane region" description="Helical" evidence="1">
    <location>
        <begin position="423"/>
        <end position="443"/>
    </location>
</feature>
<comment type="function">
    <text evidence="1">Involved in the import of threonine and serine into the cell, with the concomitant import of a proton (symport system).</text>
</comment>
<comment type="catalytic activity">
    <reaction evidence="1">
        <text>L-threonine(in) + H(+)(in) = L-threonine(out) + H(+)(out)</text>
        <dbReference type="Rhea" id="RHEA:28883"/>
        <dbReference type="ChEBI" id="CHEBI:15378"/>
        <dbReference type="ChEBI" id="CHEBI:57926"/>
    </reaction>
    <physiologicalReaction direction="right-to-left" evidence="1">
        <dbReference type="Rhea" id="RHEA:28885"/>
    </physiologicalReaction>
</comment>
<comment type="catalytic activity">
    <reaction evidence="1">
        <text>L-serine(in) + H(+)(in) = L-serine(out) + H(+)(out)</text>
        <dbReference type="Rhea" id="RHEA:28887"/>
        <dbReference type="ChEBI" id="CHEBI:15378"/>
        <dbReference type="ChEBI" id="CHEBI:33384"/>
    </reaction>
    <physiologicalReaction direction="right-to-left" evidence="1">
        <dbReference type="Rhea" id="RHEA:28889"/>
    </physiologicalReaction>
</comment>
<comment type="subcellular location">
    <subcellularLocation>
        <location evidence="1">Cell inner membrane</location>
        <topology evidence="1">Multi-pass membrane protein</topology>
    </subcellularLocation>
</comment>
<comment type="similarity">
    <text evidence="1">Belongs to the amino acid/polyamine transporter 2 family. SdaC/TdcC subfamily.</text>
</comment>